<feature type="chain" id="PRO_1000139805" description="Aliphatic amidase">
    <location>
        <begin position="1"/>
        <end position="345"/>
    </location>
</feature>
<feature type="domain" description="CN hydrolase" evidence="2">
    <location>
        <begin position="13"/>
        <end position="260"/>
    </location>
</feature>
<feature type="active site" description="Proton acceptor" evidence="1">
    <location>
        <position position="59"/>
    </location>
</feature>
<feature type="active site" description="Proton donor" evidence="1">
    <location>
        <position position="134"/>
    </location>
</feature>
<feature type="active site" description="Nucleophile" evidence="1">
    <location>
        <position position="166"/>
    </location>
</feature>
<evidence type="ECO:0000255" key="1">
    <source>
        <dbReference type="HAMAP-Rule" id="MF_01242"/>
    </source>
</evidence>
<evidence type="ECO:0000255" key="2">
    <source>
        <dbReference type="PROSITE-ProRule" id="PRU00054"/>
    </source>
</evidence>
<organism>
    <name type="scientific">Delftia acidovorans (strain DSM 14801 / SPH-1)</name>
    <dbReference type="NCBI Taxonomy" id="398578"/>
    <lineage>
        <taxon>Bacteria</taxon>
        <taxon>Pseudomonadati</taxon>
        <taxon>Pseudomonadota</taxon>
        <taxon>Betaproteobacteria</taxon>
        <taxon>Burkholderiales</taxon>
        <taxon>Comamonadaceae</taxon>
        <taxon>Delftia</taxon>
    </lineage>
</organism>
<name>AMIE_DELAS</name>
<comment type="function">
    <text evidence="1">Catalyzes the hydrolysis of short-chain aliphatic amides to their corresponding organic acids with release of ammonia.</text>
</comment>
<comment type="function">
    <text evidence="1">Also exhibits in vitro acyl transferase activity, transferring the acyl moiety of short-chain amides to hydroxylamine to form hydroxamates.</text>
</comment>
<comment type="catalytic activity">
    <reaction evidence="1">
        <text>a monocarboxylic acid amide + H2O = a monocarboxylate + NH4(+)</text>
        <dbReference type="Rhea" id="RHEA:12020"/>
        <dbReference type="ChEBI" id="CHEBI:15377"/>
        <dbReference type="ChEBI" id="CHEBI:28938"/>
        <dbReference type="ChEBI" id="CHEBI:35757"/>
        <dbReference type="ChEBI" id="CHEBI:83628"/>
        <dbReference type="EC" id="3.5.1.4"/>
    </reaction>
</comment>
<comment type="similarity">
    <text evidence="1">Belongs to the carbon-nitrogen hydrolase superfamily. Aliphatic amidase family.</text>
</comment>
<protein>
    <recommendedName>
        <fullName evidence="1">Aliphatic amidase</fullName>
        <ecNumber evidence="1">3.5.1.4</ecNumber>
    </recommendedName>
    <alternativeName>
        <fullName evidence="1">Acylamide amidohydrolase</fullName>
    </alternativeName>
</protein>
<proteinExistence type="inferred from homology"/>
<sequence length="345" mass="38565">MRHGDISSSNDCVGVAVVNYKMPRLHTKAEVLDNCRKIADMLVGMKRGLPGMDLVIFPEYSTHGIMYDAKEMYDTASAIPGEETEIFADACRRANVWGVFSLTGERHEEHPNKAPYNTLILMNNQGEIVQKYRKIMPWVPIEGWYPGDCTYVSEGPKGLKISLIICDDGNYPEIWRDCAMRGAELVVRCQGYMYPAKEQQIMVSKAMAFMNNCYVAVANAAGFDGVYSYFGHSAIIGFDGRTLGETGEEEMGIQYAELSKHLIRDARKNGQSQNHLFKLVHRGYTGTINSGDGDKGVAACPYNFYSQWVNDPEGTREMVESFTRTTVGTPECPIEGIPHEAPKHR</sequence>
<keyword id="KW-0378">Hydrolase</keyword>
<keyword id="KW-1185">Reference proteome</keyword>
<dbReference type="EC" id="3.5.1.4" evidence="1"/>
<dbReference type="EMBL" id="CP000884">
    <property type="protein sequence ID" value="ABX36273.1"/>
    <property type="molecule type" value="Genomic_DNA"/>
</dbReference>
<dbReference type="RefSeq" id="WP_012205469.1">
    <property type="nucleotide sequence ID" value="NC_010002.1"/>
</dbReference>
<dbReference type="SMR" id="A9C011"/>
<dbReference type="STRING" id="398578.Daci_3641"/>
<dbReference type="KEGG" id="dac:Daci_3641"/>
<dbReference type="eggNOG" id="COG0388">
    <property type="taxonomic scope" value="Bacteria"/>
</dbReference>
<dbReference type="HOGENOM" id="CLU_071797_0_0_4"/>
<dbReference type="Proteomes" id="UP000000784">
    <property type="component" value="Chromosome"/>
</dbReference>
<dbReference type="GO" id="GO:0004040">
    <property type="term" value="F:amidase activity"/>
    <property type="evidence" value="ECO:0007669"/>
    <property type="project" value="UniProtKB-UniRule"/>
</dbReference>
<dbReference type="CDD" id="cd07565">
    <property type="entry name" value="aliphatic_amidase"/>
    <property type="match status" value="1"/>
</dbReference>
<dbReference type="Gene3D" id="3.60.110.10">
    <property type="entry name" value="Carbon-nitrogen hydrolase"/>
    <property type="match status" value="1"/>
</dbReference>
<dbReference type="HAMAP" id="MF_01242">
    <property type="entry name" value="Aliphatic_amidase"/>
    <property type="match status" value="1"/>
</dbReference>
<dbReference type="InterPro" id="IPR050345">
    <property type="entry name" value="Aliph_Amidase/BUP"/>
</dbReference>
<dbReference type="InterPro" id="IPR023719">
    <property type="entry name" value="Aliphatic_amidase"/>
</dbReference>
<dbReference type="InterPro" id="IPR003010">
    <property type="entry name" value="C-N_Hydrolase"/>
</dbReference>
<dbReference type="InterPro" id="IPR036526">
    <property type="entry name" value="C-N_Hydrolase_sf"/>
</dbReference>
<dbReference type="NCBIfam" id="NF009802">
    <property type="entry name" value="PRK13286.1"/>
    <property type="match status" value="1"/>
</dbReference>
<dbReference type="PANTHER" id="PTHR43674:SF14">
    <property type="entry name" value="ALIPHATIC AMIDASE"/>
    <property type="match status" value="1"/>
</dbReference>
<dbReference type="PANTHER" id="PTHR43674">
    <property type="entry name" value="NITRILASE C965.09-RELATED"/>
    <property type="match status" value="1"/>
</dbReference>
<dbReference type="Pfam" id="PF00795">
    <property type="entry name" value="CN_hydrolase"/>
    <property type="match status" value="1"/>
</dbReference>
<dbReference type="SUPFAM" id="SSF56317">
    <property type="entry name" value="Carbon-nitrogen hydrolase"/>
    <property type="match status" value="1"/>
</dbReference>
<dbReference type="PROSITE" id="PS50263">
    <property type="entry name" value="CN_HYDROLASE"/>
    <property type="match status" value="1"/>
</dbReference>
<gene>
    <name evidence="1" type="primary">amiE</name>
    <name type="ordered locus">Daci_3641</name>
</gene>
<accession>A9C011</accession>
<reference key="1">
    <citation type="submission" date="2007-11" db="EMBL/GenBank/DDBJ databases">
        <title>Complete sequence of Delftia acidovorans DSM 14801 / SPH-1.</title>
        <authorList>
            <person name="Copeland A."/>
            <person name="Lucas S."/>
            <person name="Lapidus A."/>
            <person name="Barry K."/>
            <person name="Glavina del Rio T."/>
            <person name="Dalin E."/>
            <person name="Tice H."/>
            <person name="Pitluck S."/>
            <person name="Lowry S."/>
            <person name="Clum A."/>
            <person name="Schmutz J."/>
            <person name="Larimer F."/>
            <person name="Land M."/>
            <person name="Hauser L."/>
            <person name="Kyrpides N."/>
            <person name="Kim E."/>
            <person name="Schleheck D."/>
            <person name="Richardson P."/>
        </authorList>
    </citation>
    <scope>NUCLEOTIDE SEQUENCE [LARGE SCALE GENOMIC DNA]</scope>
    <source>
        <strain>DSM 14801 / SPH-1</strain>
    </source>
</reference>